<name>GATY_ECO5E</name>
<sequence length="284" mass="30855">MYVVSTKQMLNNAQRGGYAVPAFNIHNLETMQVVVETAANLHAPVIIAGTPGTFTHAGTENLLALVSAMAKHYHHPLAIHLDHHTKFDDIAQKVRSGVRSVMIDASHLPFAQNISRVKEVVDFCHRFDVSVEAELGQLGGQEDDVQVNEADAFYTNPAQAREFAEATGIDSLAVAIGTAHGMYASAPALDFSRLENIRQWVNLPLVLHGASGLSTKDIQQTIKLGICKINVATELKNAFSQALKNYLTEHPEATDPRDYLQSAKSAMRDVVSKVIADCGCEGRA</sequence>
<organism>
    <name type="scientific">Escherichia coli O157:H7 (strain EC4115 / EHEC)</name>
    <dbReference type="NCBI Taxonomy" id="444450"/>
    <lineage>
        <taxon>Bacteria</taxon>
        <taxon>Pseudomonadati</taxon>
        <taxon>Pseudomonadota</taxon>
        <taxon>Gammaproteobacteria</taxon>
        <taxon>Enterobacterales</taxon>
        <taxon>Enterobacteriaceae</taxon>
        <taxon>Escherichia</taxon>
    </lineage>
</organism>
<comment type="function">
    <text evidence="1">Catalytic subunit of the tagatose-1,6-bisphosphate aldolase GatYZ, which catalyzes the reversible aldol condensation of dihydroxyacetone phosphate (DHAP or glycerone-phosphate) with glyceraldehyde 3-phosphate (G3P) to produce tagatose 1,6-bisphosphate (TBP). Requires GatZ subunit for full activity and stability. Is involved in the catabolism of galactitol.</text>
</comment>
<comment type="catalytic activity">
    <reaction evidence="1">
        <text>D-tagatofuranose 1,6-bisphosphate = D-glyceraldehyde 3-phosphate + dihydroxyacetone phosphate</text>
        <dbReference type="Rhea" id="RHEA:22948"/>
        <dbReference type="ChEBI" id="CHEBI:57642"/>
        <dbReference type="ChEBI" id="CHEBI:58694"/>
        <dbReference type="ChEBI" id="CHEBI:59776"/>
        <dbReference type="EC" id="4.1.2.40"/>
    </reaction>
</comment>
<comment type="cofactor">
    <cofactor evidence="1">
        <name>Zn(2+)</name>
        <dbReference type="ChEBI" id="CHEBI:29105"/>
    </cofactor>
    <text evidence="1">Binds 1 zinc ion per subunit.</text>
</comment>
<comment type="pathway">
    <text evidence="1">Carbohydrate metabolism; D-tagatose 6-phosphate degradation; D-glyceraldehyde 3-phosphate and glycerone phosphate from D-tagatose 6-phosphate: step 2/2.</text>
</comment>
<comment type="subunit">
    <text evidence="1">Forms a complex with GatZ.</text>
</comment>
<comment type="similarity">
    <text evidence="1">Belongs to the class II fructose-bisphosphate aldolase family. TagBP aldolase GatY subfamily.</text>
</comment>
<feature type="chain" id="PRO_1000140436" description="D-tagatose-1,6-bisphosphate aldolase subunit GatY">
    <location>
        <begin position="1"/>
        <end position="284"/>
    </location>
</feature>
<feature type="active site" description="Proton donor" evidence="1">
    <location>
        <position position="82"/>
    </location>
</feature>
<feature type="binding site" evidence="1">
    <location>
        <position position="83"/>
    </location>
    <ligand>
        <name>Zn(2+)</name>
        <dbReference type="ChEBI" id="CHEBI:29105"/>
        <note>catalytic</note>
    </ligand>
</feature>
<feature type="binding site" evidence="1">
    <location>
        <position position="180"/>
    </location>
    <ligand>
        <name>Zn(2+)</name>
        <dbReference type="ChEBI" id="CHEBI:29105"/>
        <note>catalytic</note>
    </ligand>
</feature>
<feature type="binding site" evidence="1">
    <location>
        <position position="181"/>
    </location>
    <ligand>
        <name>dihydroxyacetone phosphate</name>
        <dbReference type="ChEBI" id="CHEBI:57642"/>
    </ligand>
</feature>
<feature type="binding site" evidence="1">
    <location>
        <position position="208"/>
    </location>
    <ligand>
        <name>Zn(2+)</name>
        <dbReference type="ChEBI" id="CHEBI:29105"/>
        <note>catalytic</note>
    </ligand>
</feature>
<feature type="binding site" evidence="1">
    <location>
        <begin position="209"/>
        <end position="211"/>
    </location>
    <ligand>
        <name>dihydroxyacetone phosphate</name>
        <dbReference type="ChEBI" id="CHEBI:57642"/>
    </ligand>
</feature>
<feature type="binding site" evidence="1">
    <location>
        <begin position="230"/>
        <end position="233"/>
    </location>
    <ligand>
        <name>dihydroxyacetone phosphate</name>
        <dbReference type="ChEBI" id="CHEBI:57642"/>
    </ligand>
</feature>
<evidence type="ECO:0000255" key="1">
    <source>
        <dbReference type="HAMAP-Rule" id="MF_01294"/>
    </source>
</evidence>
<keyword id="KW-0298">Galactitol metabolism</keyword>
<keyword id="KW-0456">Lyase</keyword>
<keyword id="KW-0479">Metal-binding</keyword>
<keyword id="KW-0862">Zinc</keyword>
<proteinExistence type="inferred from homology"/>
<accession>B5YV43</accession>
<protein>
    <recommendedName>
        <fullName evidence="1">D-tagatose-1,6-bisphosphate aldolase subunit GatY</fullName>
        <shortName evidence="1">TBPA</shortName>
        <shortName evidence="1">TagBP aldolase</shortName>
        <ecNumber evidence="1">4.1.2.40</ecNumber>
    </recommendedName>
    <alternativeName>
        <fullName evidence="1">D-tagatose-bisphosphate aldolase class II</fullName>
    </alternativeName>
    <alternativeName>
        <fullName evidence="1">Tagatose-bisphosphate aldolase</fullName>
    </alternativeName>
</protein>
<gene>
    <name evidence="1" type="primary">gatY</name>
    <name type="ordered locus">ECH74115_3075</name>
</gene>
<dbReference type="EC" id="4.1.2.40" evidence="1"/>
<dbReference type="EMBL" id="CP001164">
    <property type="protein sequence ID" value="ACI35770.1"/>
    <property type="molecule type" value="Genomic_DNA"/>
</dbReference>
<dbReference type="RefSeq" id="WP_001301486.1">
    <property type="nucleotide sequence ID" value="NC_011353.1"/>
</dbReference>
<dbReference type="SMR" id="B5YV43"/>
<dbReference type="KEGG" id="ecf:ECH74115_3075"/>
<dbReference type="HOGENOM" id="CLU_040088_0_1_6"/>
<dbReference type="UniPathway" id="UPA00704">
    <property type="reaction ID" value="UER00716"/>
</dbReference>
<dbReference type="GO" id="GO:0005829">
    <property type="term" value="C:cytosol"/>
    <property type="evidence" value="ECO:0007669"/>
    <property type="project" value="TreeGrafter"/>
</dbReference>
<dbReference type="GO" id="GO:0009025">
    <property type="term" value="F:tagatose-bisphosphate aldolase activity"/>
    <property type="evidence" value="ECO:0007669"/>
    <property type="project" value="UniProtKB-UniRule"/>
</dbReference>
<dbReference type="GO" id="GO:0008270">
    <property type="term" value="F:zinc ion binding"/>
    <property type="evidence" value="ECO:0007669"/>
    <property type="project" value="UniProtKB-UniRule"/>
</dbReference>
<dbReference type="GO" id="GO:2001059">
    <property type="term" value="P:D-tagatose 6-phosphate catabolic process"/>
    <property type="evidence" value="ECO:0007669"/>
    <property type="project" value="UniProtKB-UniRule"/>
</dbReference>
<dbReference type="GO" id="GO:0019404">
    <property type="term" value="P:galactitol catabolic process"/>
    <property type="evidence" value="ECO:0007669"/>
    <property type="project" value="InterPro"/>
</dbReference>
<dbReference type="CDD" id="cd00947">
    <property type="entry name" value="TBP_aldolase_IIB"/>
    <property type="match status" value="1"/>
</dbReference>
<dbReference type="FunFam" id="3.20.20.70:FF:000043">
    <property type="entry name" value="D-tagatose-1,6-bisphosphate aldolase subunit GatY"/>
    <property type="match status" value="1"/>
</dbReference>
<dbReference type="Gene3D" id="3.20.20.70">
    <property type="entry name" value="Aldolase class I"/>
    <property type="match status" value="1"/>
</dbReference>
<dbReference type="HAMAP" id="MF_01294">
    <property type="entry name" value="TagBP_aldolase_GatY"/>
    <property type="match status" value="1"/>
</dbReference>
<dbReference type="InterPro" id="IPR013785">
    <property type="entry name" value="Aldolase_TIM"/>
</dbReference>
<dbReference type="InterPro" id="IPR050246">
    <property type="entry name" value="Class_II_FBP_aldolase"/>
</dbReference>
<dbReference type="InterPro" id="IPR000771">
    <property type="entry name" value="FBA_II"/>
</dbReference>
<dbReference type="InterPro" id="IPR011288">
    <property type="entry name" value="TagBP_ald_KbaY/GatY"/>
</dbReference>
<dbReference type="InterPro" id="IPR023955">
    <property type="entry name" value="TagBP_aldolase_GatY"/>
</dbReference>
<dbReference type="NCBIfam" id="TIGR00167">
    <property type="entry name" value="cbbA"/>
    <property type="match status" value="1"/>
</dbReference>
<dbReference type="NCBIfam" id="NF006626">
    <property type="entry name" value="PRK09195.1"/>
    <property type="match status" value="1"/>
</dbReference>
<dbReference type="NCBIfam" id="NF009374">
    <property type="entry name" value="PRK12737.1"/>
    <property type="match status" value="1"/>
</dbReference>
<dbReference type="NCBIfam" id="TIGR01858">
    <property type="entry name" value="tag_bisphos_ald"/>
    <property type="match status" value="1"/>
</dbReference>
<dbReference type="PANTHER" id="PTHR30304">
    <property type="entry name" value="D-TAGATOSE-1,6-BISPHOSPHATE ALDOLASE"/>
    <property type="match status" value="1"/>
</dbReference>
<dbReference type="PANTHER" id="PTHR30304:SF0">
    <property type="entry name" value="D-TAGATOSE-1,6-BISPHOSPHATE ALDOLASE SUBUNIT GATY-RELATED"/>
    <property type="match status" value="1"/>
</dbReference>
<dbReference type="Pfam" id="PF01116">
    <property type="entry name" value="F_bP_aldolase"/>
    <property type="match status" value="1"/>
</dbReference>
<dbReference type="PIRSF" id="PIRSF001359">
    <property type="entry name" value="F_bP_aldolase_II"/>
    <property type="match status" value="1"/>
</dbReference>
<dbReference type="SUPFAM" id="SSF51569">
    <property type="entry name" value="Aldolase"/>
    <property type="match status" value="1"/>
</dbReference>
<dbReference type="PROSITE" id="PS00602">
    <property type="entry name" value="ALDOLASE_CLASS_II_1"/>
    <property type="match status" value="1"/>
</dbReference>
<dbReference type="PROSITE" id="PS00806">
    <property type="entry name" value="ALDOLASE_CLASS_II_2"/>
    <property type="match status" value="1"/>
</dbReference>
<reference key="1">
    <citation type="journal article" date="2011" name="Proc. Natl. Acad. Sci. U.S.A.">
        <title>Genomic anatomy of Escherichia coli O157:H7 outbreaks.</title>
        <authorList>
            <person name="Eppinger M."/>
            <person name="Mammel M.K."/>
            <person name="Leclerc J.E."/>
            <person name="Ravel J."/>
            <person name="Cebula T.A."/>
        </authorList>
    </citation>
    <scope>NUCLEOTIDE SEQUENCE [LARGE SCALE GENOMIC DNA]</scope>
    <source>
        <strain>EC4115 / EHEC</strain>
    </source>
</reference>